<protein>
    <recommendedName>
        <fullName evidence="1">Aspartyl/glutamyl-tRNA(Asn/Gln) amidotransferase subunit C</fullName>
        <shortName evidence="1">Asp/Glu-ADT subunit C</shortName>
        <ecNumber evidence="1">6.3.5.-</ecNumber>
    </recommendedName>
</protein>
<dbReference type="EC" id="6.3.5.-" evidence="1"/>
<dbReference type="EMBL" id="CP000348">
    <property type="protein sequence ID" value="ABJ79315.1"/>
    <property type="molecule type" value="Genomic_DNA"/>
</dbReference>
<dbReference type="RefSeq" id="WP_011670412.1">
    <property type="nucleotide sequence ID" value="NC_008508.1"/>
</dbReference>
<dbReference type="SMR" id="Q050D0"/>
<dbReference type="KEGG" id="lbl:LBL_1880"/>
<dbReference type="HOGENOM" id="CLU_105899_2_1_12"/>
<dbReference type="GO" id="GO:0050566">
    <property type="term" value="F:asparaginyl-tRNA synthase (glutamine-hydrolyzing) activity"/>
    <property type="evidence" value="ECO:0007669"/>
    <property type="project" value="RHEA"/>
</dbReference>
<dbReference type="GO" id="GO:0005524">
    <property type="term" value="F:ATP binding"/>
    <property type="evidence" value="ECO:0007669"/>
    <property type="project" value="UniProtKB-KW"/>
</dbReference>
<dbReference type="GO" id="GO:0050567">
    <property type="term" value="F:glutaminyl-tRNA synthase (glutamine-hydrolyzing) activity"/>
    <property type="evidence" value="ECO:0007669"/>
    <property type="project" value="UniProtKB-UniRule"/>
</dbReference>
<dbReference type="GO" id="GO:0070681">
    <property type="term" value="P:glutaminyl-tRNAGln biosynthesis via transamidation"/>
    <property type="evidence" value="ECO:0007669"/>
    <property type="project" value="TreeGrafter"/>
</dbReference>
<dbReference type="GO" id="GO:0006450">
    <property type="term" value="P:regulation of translational fidelity"/>
    <property type="evidence" value="ECO:0007669"/>
    <property type="project" value="InterPro"/>
</dbReference>
<dbReference type="GO" id="GO:0006412">
    <property type="term" value="P:translation"/>
    <property type="evidence" value="ECO:0007669"/>
    <property type="project" value="UniProtKB-UniRule"/>
</dbReference>
<dbReference type="Gene3D" id="1.10.20.60">
    <property type="entry name" value="Glu-tRNAGln amidotransferase C subunit, N-terminal domain"/>
    <property type="match status" value="1"/>
</dbReference>
<dbReference type="HAMAP" id="MF_00122">
    <property type="entry name" value="GatC"/>
    <property type="match status" value="1"/>
</dbReference>
<dbReference type="InterPro" id="IPR036113">
    <property type="entry name" value="Asp/Glu-ADT_sf_sub_c"/>
</dbReference>
<dbReference type="InterPro" id="IPR003837">
    <property type="entry name" value="GatC"/>
</dbReference>
<dbReference type="NCBIfam" id="TIGR00135">
    <property type="entry name" value="gatC"/>
    <property type="match status" value="1"/>
</dbReference>
<dbReference type="PANTHER" id="PTHR15004">
    <property type="entry name" value="GLUTAMYL-TRNA(GLN) AMIDOTRANSFERASE SUBUNIT C, MITOCHONDRIAL"/>
    <property type="match status" value="1"/>
</dbReference>
<dbReference type="PANTHER" id="PTHR15004:SF0">
    <property type="entry name" value="GLUTAMYL-TRNA(GLN) AMIDOTRANSFERASE SUBUNIT C, MITOCHONDRIAL"/>
    <property type="match status" value="1"/>
</dbReference>
<dbReference type="Pfam" id="PF02686">
    <property type="entry name" value="GatC"/>
    <property type="match status" value="1"/>
</dbReference>
<dbReference type="SUPFAM" id="SSF141000">
    <property type="entry name" value="Glu-tRNAGln amidotransferase C subunit"/>
    <property type="match status" value="1"/>
</dbReference>
<organism>
    <name type="scientific">Leptospira borgpetersenii serovar Hardjo-bovis (strain L550)</name>
    <dbReference type="NCBI Taxonomy" id="355276"/>
    <lineage>
        <taxon>Bacteria</taxon>
        <taxon>Pseudomonadati</taxon>
        <taxon>Spirochaetota</taxon>
        <taxon>Spirochaetia</taxon>
        <taxon>Leptospirales</taxon>
        <taxon>Leptospiraceae</taxon>
        <taxon>Leptospira</taxon>
    </lineage>
</organism>
<comment type="function">
    <text evidence="1">Allows the formation of correctly charged Asn-tRNA(Asn) or Gln-tRNA(Gln) through the transamidation of misacylated Asp-tRNA(Asn) or Glu-tRNA(Gln) in organisms which lack either or both of asparaginyl-tRNA or glutaminyl-tRNA synthetases. The reaction takes place in the presence of glutamine and ATP through an activated phospho-Asp-tRNA(Asn) or phospho-Glu-tRNA(Gln).</text>
</comment>
<comment type="catalytic activity">
    <reaction evidence="1">
        <text>L-glutamyl-tRNA(Gln) + L-glutamine + ATP + H2O = L-glutaminyl-tRNA(Gln) + L-glutamate + ADP + phosphate + H(+)</text>
        <dbReference type="Rhea" id="RHEA:17521"/>
        <dbReference type="Rhea" id="RHEA-COMP:9681"/>
        <dbReference type="Rhea" id="RHEA-COMP:9684"/>
        <dbReference type="ChEBI" id="CHEBI:15377"/>
        <dbReference type="ChEBI" id="CHEBI:15378"/>
        <dbReference type="ChEBI" id="CHEBI:29985"/>
        <dbReference type="ChEBI" id="CHEBI:30616"/>
        <dbReference type="ChEBI" id="CHEBI:43474"/>
        <dbReference type="ChEBI" id="CHEBI:58359"/>
        <dbReference type="ChEBI" id="CHEBI:78520"/>
        <dbReference type="ChEBI" id="CHEBI:78521"/>
        <dbReference type="ChEBI" id="CHEBI:456216"/>
    </reaction>
</comment>
<comment type="catalytic activity">
    <reaction evidence="1">
        <text>L-aspartyl-tRNA(Asn) + L-glutamine + ATP + H2O = L-asparaginyl-tRNA(Asn) + L-glutamate + ADP + phosphate + 2 H(+)</text>
        <dbReference type="Rhea" id="RHEA:14513"/>
        <dbReference type="Rhea" id="RHEA-COMP:9674"/>
        <dbReference type="Rhea" id="RHEA-COMP:9677"/>
        <dbReference type="ChEBI" id="CHEBI:15377"/>
        <dbReference type="ChEBI" id="CHEBI:15378"/>
        <dbReference type="ChEBI" id="CHEBI:29985"/>
        <dbReference type="ChEBI" id="CHEBI:30616"/>
        <dbReference type="ChEBI" id="CHEBI:43474"/>
        <dbReference type="ChEBI" id="CHEBI:58359"/>
        <dbReference type="ChEBI" id="CHEBI:78515"/>
        <dbReference type="ChEBI" id="CHEBI:78516"/>
        <dbReference type="ChEBI" id="CHEBI:456216"/>
    </reaction>
</comment>
<comment type="subunit">
    <text evidence="1">Heterotrimer of A, B and C subunits.</text>
</comment>
<comment type="similarity">
    <text evidence="1">Belongs to the GatC family.</text>
</comment>
<accession>Q050D0</accession>
<sequence>MNLNEDSLRKIAELSRLNIRPKEKEATLRDFNKILEYVDQVKGLDVSSIRDDEIYFRHENSIRPDLVGQHLSREEIEKFAPSFQNGYFVVPKVIET</sequence>
<proteinExistence type="inferred from homology"/>
<name>GATC_LEPBL</name>
<keyword id="KW-0067">ATP-binding</keyword>
<keyword id="KW-0436">Ligase</keyword>
<keyword id="KW-0547">Nucleotide-binding</keyword>
<keyword id="KW-0648">Protein biosynthesis</keyword>
<reference key="1">
    <citation type="journal article" date="2006" name="Proc. Natl. Acad. Sci. U.S.A.">
        <title>Genome reduction in Leptospira borgpetersenii reflects limited transmission potential.</title>
        <authorList>
            <person name="Bulach D.M."/>
            <person name="Zuerner R.L."/>
            <person name="Wilson P."/>
            <person name="Seemann T."/>
            <person name="McGrath A."/>
            <person name="Cullen P.A."/>
            <person name="Davis J."/>
            <person name="Johnson M."/>
            <person name="Kuczek E."/>
            <person name="Alt D.P."/>
            <person name="Peterson-Burch B."/>
            <person name="Coppel R.L."/>
            <person name="Rood J.I."/>
            <person name="Davies J.K."/>
            <person name="Adler B."/>
        </authorList>
    </citation>
    <scope>NUCLEOTIDE SEQUENCE [LARGE SCALE GENOMIC DNA]</scope>
    <source>
        <strain>L550</strain>
    </source>
</reference>
<gene>
    <name evidence="1" type="primary">gatC</name>
    <name type="ordered locus">LBL_1880</name>
</gene>
<evidence type="ECO:0000255" key="1">
    <source>
        <dbReference type="HAMAP-Rule" id="MF_00122"/>
    </source>
</evidence>
<feature type="chain" id="PRO_1000016139" description="Aspartyl/glutamyl-tRNA(Asn/Gln) amidotransferase subunit C">
    <location>
        <begin position="1"/>
        <end position="96"/>
    </location>
</feature>